<accession>Q5F5J4</accession>
<dbReference type="EMBL" id="AE004969">
    <property type="protein sequence ID" value="AAW90543.1"/>
    <property type="molecule type" value="Genomic_DNA"/>
</dbReference>
<dbReference type="RefSeq" id="WP_003688085.1">
    <property type="nucleotide sequence ID" value="NC_002946.2"/>
</dbReference>
<dbReference type="RefSeq" id="YP_208955.1">
    <property type="nucleotide sequence ID" value="NC_002946.2"/>
</dbReference>
<dbReference type="PDB" id="5X9W">
    <property type="method" value="X-ray"/>
    <property type="resolution" value="3.30 A"/>
    <property type="chains" value="A/B=1-814"/>
</dbReference>
<dbReference type="PDB" id="5YK4">
    <property type="method" value="X-ray"/>
    <property type="resolution" value="2.97 A"/>
    <property type="chains" value="A/B=1-814"/>
</dbReference>
<dbReference type="PDBsum" id="5X9W"/>
<dbReference type="PDBsum" id="5YK4"/>
<dbReference type="SMR" id="Q5F5J4"/>
<dbReference type="STRING" id="242231.NGO_1930"/>
<dbReference type="GeneID" id="66754187"/>
<dbReference type="KEGG" id="ngo:NGO_1930"/>
<dbReference type="PATRIC" id="fig|242231.10.peg.2326"/>
<dbReference type="HOGENOM" id="CLU_002472_4_0_4"/>
<dbReference type="Proteomes" id="UP000000535">
    <property type="component" value="Chromosome"/>
</dbReference>
<dbReference type="GO" id="GO:0005829">
    <property type="term" value="C:cytosol"/>
    <property type="evidence" value="ECO:0007669"/>
    <property type="project" value="TreeGrafter"/>
</dbReference>
<dbReference type="GO" id="GO:0005524">
    <property type="term" value="F:ATP binding"/>
    <property type="evidence" value="ECO:0007669"/>
    <property type="project" value="UniProtKB-UniRule"/>
</dbReference>
<dbReference type="GO" id="GO:0140664">
    <property type="term" value="F:ATP-dependent DNA damage sensor activity"/>
    <property type="evidence" value="ECO:0007669"/>
    <property type="project" value="InterPro"/>
</dbReference>
<dbReference type="GO" id="GO:0003684">
    <property type="term" value="F:damaged DNA binding"/>
    <property type="evidence" value="ECO:0007669"/>
    <property type="project" value="UniProtKB-UniRule"/>
</dbReference>
<dbReference type="GO" id="GO:0030983">
    <property type="term" value="F:mismatched DNA binding"/>
    <property type="evidence" value="ECO:0007669"/>
    <property type="project" value="InterPro"/>
</dbReference>
<dbReference type="GO" id="GO:0006298">
    <property type="term" value="P:mismatch repair"/>
    <property type="evidence" value="ECO:0007669"/>
    <property type="project" value="UniProtKB-UniRule"/>
</dbReference>
<dbReference type="FunFam" id="1.10.1420.10:FF:000018">
    <property type="entry name" value="DNA mismatch repair protein MutS"/>
    <property type="match status" value="1"/>
</dbReference>
<dbReference type="FunFam" id="3.40.1170.10:FF:000001">
    <property type="entry name" value="DNA mismatch repair protein MutS"/>
    <property type="match status" value="1"/>
</dbReference>
<dbReference type="FunFam" id="3.40.50.300:FF:000283">
    <property type="entry name" value="DNA mismatch repair protein MutS"/>
    <property type="match status" value="1"/>
</dbReference>
<dbReference type="Gene3D" id="1.10.1420.10">
    <property type="match status" value="2"/>
</dbReference>
<dbReference type="Gene3D" id="6.10.140.430">
    <property type="match status" value="1"/>
</dbReference>
<dbReference type="Gene3D" id="3.40.1170.10">
    <property type="entry name" value="DNA repair protein MutS, domain I"/>
    <property type="match status" value="1"/>
</dbReference>
<dbReference type="Gene3D" id="3.30.420.110">
    <property type="entry name" value="MutS, connector domain"/>
    <property type="match status" value="1"/>
</dbReference>
<dbReference type="Gene3D" id="3.40.50.300">
    <property type="entry name" value="P-loop containing nucleotide triphosphate hydrolases"/>
    <property type="match status" value="1"/>
</dbReference>
<dbReference type="HAMAP" id="MF_00096">
    <property type="entry name" value="MutS"/>
    <property type="match status" value="1"/>
</dbReference>
<dbReference type="InterPro" id="IPR005748">
    <property type="entry name" value="DNA_mismatch_repair_MutS"/>
</dbReference>
<dbReference type="InterPro" id="IPR007695">
    <property type="entry name" value="DNA_mismatch_repair_MutS-lik_N"/>
</dbReference>
<dbReference type="InterPro" id="IPR017261">
    <property type="entry name" value="DNA_mismatch_repair_MutS/MSH"/>
</dbReference>
<dbReference type="InterPro" id="IPR000432">
    <property type="entry name" value="DNA_mismatch_repair_MutS_C"/>
</dbReference>
<dbReference type="InterPro" id="IPR007861">
    <property type="entry name" value="DNA_mismatch_repair_MutS_clamp"/>
</dbReference>
<dbReference type="InterPro" id="IPR007696">
    <property type="entry name" value="DNA_mismatch_repair_MutS_core"/>
</dbReference>
<dbReference type="InterPro" id="IPR016151">
    <property type="entry name" value="DNA_mismatch_repair_MutS_N"/>
</dbReference>
<dbReference type="InterPro" id="IPR036187">
    <property type="entry name" value="DNA_mismatch_repair_MutS_sf"/>
</dbReference>
<dbReference type="InterPro" id="IPR007860">
    <property type="entry name" value="DNA_mmatch_repair_MutS_con_dom"/>
</dbReference>
<dbReference type="InterPro" id="IPR045076">
    <property type="entry name" value="MutS"/>
</dbReference>
<dbReference type="InterPro" id="IPR036678">
    <property type="entry name" value="MutS_con_dom_sf"/>
</dbReference>
<dbReference type="InterPro" id="IPR027417">
    <property type="entry name" value="P-loop_NTPase"/>
</dbReference>
<dbReference type="NCBIfam" id="TIGR01070">
    <property type="entry name" value="mutS1"/>
    <property type="match status" value="1"/>
</dbReference>
<dbReference type="NCBIfam" id="NF003810">
    <property type="entry name" value="PRK05399.1"/>
    <property type="match status" value="1"/>
</dbReference>
<dbReference type="PANTHER" id="PTHR11361:SF34">
    <property type="entry name" value="DNA MISMATCH REPAIR PROTEIN MSH1, MITOCHONDRIAL"/>
    <property type="match status" value="1"/>
</dbReference>
<dbReference type="PANTHER" id="PTHR11361">
    <property type="entry name" value="DNA MISMATCH REPAIR PROTEIN MUTS FAMILY MEMBER"/>
    <property type="match status" value="1"/>
</dbReference>
<dbReference type="Pfam" id="PF01624">
    <property type="entry name" value="MutS_I"/>
    <property type="match status" value="1"/>
</dbReference>
<dbReference type="Pfam" id="PF05188">
    <property type="entry name" value="MutS_II"/>
    <property type="match status" value="1"/>
</dbReference>
<dbReference type="Pfam" id="PF05192">
    <property type="entry name" value="MutS_III"/>
    <property type="match status" value="1"/>
</dbReference>
<dbReference type="Pfam" id="PF05190">
    <property type="entry name" value="MutS_IV"/>
    <property type="match status" value="1"/>
</dbReference>
<dbReference type="Pfam" id="PF00488">
    <property type="entry name" value="MutS_V"/>
    <property type="match status" value="1"/>
</dbReference>
<dbReference type="PIRSF" id="PIRSF037677">
    <property type="entry name" value="DNA_mis_repair_Msh6"/>
    <property type="match status" value="1"/>
</dbReference>
<dbReference type="SMART" id="SM00534">
    <property type="entry name" value="MUTSac"/>
    <property type="match status" value="1"/>
</dbReference>
<dbReference type="SMART" id="SM00533">
    <property type="entry name" value="MUTSd"/>
    <property type="match status" value="1"/>
</dbReference>
<dbReference type="SUPFAM" id="SSF55271">
    <property type="entry name" value="DNA repair protein MutS, domain I"/>
    <property type="match status" value="1"/>
</dbReference>
<dbReference type="SUPFAM" id="SSF53150">
    <property type="entry name" value="DNA repair protein MutS, domain II"/>
    <property type="match status" value="1"/>
</dbReference>
<dbReference type="SUPFAM" id="SSF48334">
    <property type="entry name" value="DNA repair protein MutS, domain III"/>
    <property type="match status" value="1"/>
</dbReference>
<dbReference type="SUPFAM" id="SSF52540">
    <property type="entry name" value="P-loop containing nucleoside triphosphate hydrolases"/>
    <property type="match status" value="1"/>
</dbReference>
<dbReference type="PROSITE" id="PS00486">
    <property type="entry name" value="DNA_MISMATCH_REPAIR_2"/>
    <property type="match status" value="1"/>
</dbReference>
<sequence>MSKSAVSPMMQQYLGIKAQHTDKLVFYRMGDFYELFLDDAVEAAKLLDITLTTRGQMDGVPIKMAGVPFHAAEQYLARLVKLGKSVAICEQVGEVGAGKGPVERKVVRIVTPGTLTDSALLEDKETNRIVAVSPDKKYIGLAWASLQSGEFKTKLTTADKLNDELARLQAAEILLPDSKNAPQLQTASGVTRLNAWQFAADAGEKLLTEYFGCQDLRGFGLDSKEHAVSIGAAGALLNYIRLTQNLMPQHLDGLSLETDSQYIGMDAATRRNLEITQTLSGKKTPTLFSILDGCATHMGSRLLALWLHHPLRNRAHIRARQEAVTALESQYEPLQCHLKSIADIERIAARIAVGNARPRDLASLRDSLFELAQIDLSATGSSLLETLKAVFPETLPVAETLKAAVMPEPSVWLKDGNVINHGFHPELDELRRIQNHGDEFLLDLEAKERERTGLSTLKVEFNRVHGFYIELSKTQAEQAPADYQRRQTLKNAERFITPELKAFEDKVLTAQDQALALEKQLFDGVLKNLRTALPQLQKAAKAAAALDVLSTFSALAKERNFVRPEFADYPVVHIENGRHPVVEQQVRHFTANHTDLDHKHRLMLLTGPNMGGKSTYMRQVALIVLLAHTGCFVPADAATIGPVDQIFTRIGASDDLASNRSTFMVEMSETAYILHHATEQSIVLMDEVGRGTSTFDGLALAHAIAEHLLQKNKSFSLFATHYFELTYLPEAHAAAVNMHLSALEQGRDIVFLHQIQPGPAGKSYGIAVAKLAGLPVRALKAAQKHLNGLENQAAANRPQLDIFSTMPSEKGDEPNVDCFVDKAEEKHFEGILAAALENLDPDSLTPREALSELYRLKDLCKSVS</sequence>
<reference key="1">
    <citation type="submission" date="2003-03" db="EMBL/GenBank/DDBJ databases">
        <title>The complete genome sequence of Neisseria gonorrhoeae.</title>
        <authorList>
            <person name="Lewis L.A."/>
            <person name="Gillaspy A.F."/>
            <person name="McLaughlin R.E."/>
            <person name="Gipson M."/>
            <person name="Ducey T.F."/>
            <person name="Ownbey T."/>
            <person name="Hartman K."/>
            <person name="Nydick C."/>
            <person name="Carson M.B."/>
            <person name="Vaughn J."/>
            <person name="Thomson C."/>
            <person name="Song L."/>
            <person name="Lin S."/>
            <person name="Yuan X."/>
            <person name="Najar F."/>
            <person name="Zhan M."/>
            <person name="Ren Q."/>
            <person name="Zhu H."/>
            <person name="Qi S."/>
            <person name="Kenton S.M."/>
            <person name="Lai H."/>
            <person name="White J.D."/>
            <person name="Clifton S."/>
            <person name="Roe B.A."/>
            <person name="Dyer D.W."/>
        </authorList>
    </citation>
    <scope>NUCLEOTIDE SEQUENCE [LARGE SCALE GENOMIC DNA]</scope>
    <source>
        <strain>ATCC 700825 / FA 1090</strain>
    </source>
</reference>
<gene>
    <name evidence="1" type="primary">mutS</name>
    <name type="ordered locus">NGO_1930</name>
</gene>
<evidence type="ECO:0000255" key="1">
    <source>
        <dbReference type="HAMAP-Rule" id="MF_00096"/>
    </source>
</evidence>
<evidence type="ECO:0007829" key="2">
    <source>
        <dbReference type="PDB" id="5X9W"/>
    </source>
</evidence>
<evidence type="ECO:0007829" key="3">
    <source>
        <dbReference type="PDB" id="5YK4"/>
    </source>
</evidence>
<organism>
    <name type="scientific">Neisseria gonorrhoeae (strain ATCC 700825 / FA 1090)</name>
    <dbReference type="NCBI Taxonomy" id="242231"/>
    <lineage>
        <taxon>Bacteria</taxon>
        <taxon>Pseudomonadati</taxon>
        <taxon>Pseudomonadota</taxon>
        <taxon>Betaproteobacteria</taxon>
        <taxon>Neisseriales</taxon>
        <taxon>Neisseriaceae</taxon>
        <taxon>Neisseria</taxon>
    </lineage>
</organism>
<comment type="function">
    <text evidence="1">This protein is involved in the repair of mismatches in DNA. It is possible that it carries out the mismatch recognition step. This protein has a weak ATPase activity.</text>
</comment>
<comment type="similarity">
    <text evidence="1">Belongs to the DNA mismatch repair MutS family.</text>
</comment>
<protein>
    <recommendedName>
        <fullName evidence="1">DNA mismatch repair protein MutS</fullName>
    </recommendedName>
</protein>
<keyword id="KW-0002">3D-structure</keyword>
<keyword id="KW-0067">ATP-binding</keyword>
<keyword id="KW-0227">DNA damage</keyword>
<keyword id="KW-0234">DNA repair</keyword>
<keyword id="KW-0238">DNA-binding</keyword>
<keyword id="KW-0547">Nucleotide-binding</keyword>
<keyword id="KW-1185">Reference proteome</keyword>
<proteinExistence type="evidence at protein level"/>
<name>MUTS_NEIG1</name>
<feature type="chain" id="PRO_0000224384" description="DNA mismatch repair protein MutS">
    <location>
        <begin position="1"/>
        <end position="864"/>
    </location>
</feature>
<feature type="binding site" evidence="1">
    <location>
        <begin position="607"/>
        <end position="614"/>
    </location>
    <ligand>
        <name>ATP</name>
        <dbReference type="ChEBI" id="CHEBI:30616"/>
    </ligand>
</feature>
<feature type="strand" evidence="3">
    <location>
        <begin position="3"/>
        <end position="6"/>
    </location>
</feature>
<feature type="helix" evidence="3">
    <location>
        <begin position="8"/>
        <end position="17"/>
    </location>
</feature>
<feature type="strand" evidence="3">
    <location>
        <begin position="21"/>
        <end position="29"/>
    </location>
</feature>
<feature type="strand" evidence="3">
    <location>
        <begin position="32"/>
        <end position="36"/>
    </location>
</feature>
<feature type="helix" evidence="3">
    <location>
        <begin position="38"/>
        <end position="47"/>
    </location>
</feature>
<feature type="strand" evidence="3">
    <location>
        <begin position="52"/>
        <end position="57"/>
    </location>
</feature>
<feature type="strand" evidence="3">
    <location>
        <begin position="60"/>
        <end position="68"/>
    </location>
</feature>
<feature type="helix" evidence="3">
    <location>
        <begin position="69"/>
        <end position="71"/>
    </location>
</feature>
<feature type="helix" evidence="3">
    <location>
        <begin position="72"/>
        <end position="81"/>
    </location>
</feature>
<feature type="strand" evidence="3">
    <location>
        <begin position="86"/>
        <end position="93"/>
    </location>
</feature>
<feature type="turn" evidence="3">
    <location>
        <begin position="95"/>
        <end position="98"/>
    </location>
</feature>
<feature type="strand" evidence="3">
    <location>
        <begin position="102"/>
        <end position="105"/>
    </location>
</feature>
<feature type="helix" evidence="3">
    <location>
        <begin position="118"/>
        <end position="120"/>
    </location>
</feature>
<feature type="strand" evidence="3">
    <location>
        <begin position="129"/>
        <end position="134"/>
    </location>
</feature>
<feature type="strand" evidence="3">
    <location>
        <begin position="136"/>
        <end position="145"/>
    </location>
</feature>
<feature type="turn" evidence="3">
    <location>
        <begin position="146"/>
        <end position="149"/>
    </location>
</feature>
<feature type="strand" evidence="3">
    <location>
        <begin position="150"/>
        <end position="156"/>
    </location>
</feature>
<feature type="helix" evidence="3">
    <location>
        <begin position="161"/>
        <end position="168"/>
    </location>
</feature>
<feature type="strand" evidence="3">
    <location>
        <begin position="171"/>
        <end position="176"/>
    </location>
</feature>
<feature type="strand" evidence="3">
    <location>
        <begin position="188"/>
        <end position="193"/>
    </location>
</feature>
<feature type="helix" evidence="3">
    <location>
        <begin position="195"/>
        <end position="198"/>
    </location>
</feature>
<feature type="helix" evidence="3">
    <location>
        <begin position="200"/>
        <end position="211"/>
    </location>
</feature>
<feature type="turn" evidence="3">
    <location>
        <begin position="217"/>
        <end position="220"/>
    </location>
</feature>
<feature type="turn" evidence="3">
    <location>
        <begin position="223"/>
        <end position="225"/>
    </location>
</feature>
<feature type="helix" evidence="3">
    <location>
        <begin position="227"/>
        <end position="243"/>
    </location>
</feature>
<feature type="strand" evidence="3">
    <location>
        <begin position="244"/>
        <end position="246"/>
    </location>
</feature>
<feature type="strand" evidence="3">
    <location>
        <begin position="255"/>
        <end position="257"/>
    </location>
</feature>
<feature type="helix" evidence="3">
    <location>
        <begin position="267"/>
        <end position="273"/>
    </location>
</feature>
<feature type="strand" evidence="3">
    <location>
        <begin position="275"/>
        <end position="277"/>
    </location>
</feature>
<feature type="strand" evidence="2">
    <location>
        <begin position="281"/>
        <end position="285"/>
    </location>
</feature>
<feature type="helix" evidence="3">
    <location>
        <begin position="287"/>
        <end position="291"/>
    </location>
</feature>
<feature type="helix" evidence="3">
    <location>
        <begin position="297"/>
        <end position="308"/>
    </location>
</feature>
<feature type="helix" evidence="3">
    <location>
        <begin position="314"/>
        <end position="327"/>
    </location>
</feature>
<feature type="turn" evidence="3">
    <location>
        <begin position="328"/>
        <end position="330"/>
    </location>
</feature>
<feature type="helix" evidence="3">
    <location>
        <begin position="331"/>
        <end position="338"/>
    </location>
</feature>
<feature type="helix" evidence="3">
    <location>
        <begin position="344"/>
        <end position="352"/>
    </location>
</feature>
<feature type="helix" evidence="3">
    <location>
        <begin position="358"/>
        <end position="372"/>
    </location>
</feature>
<feature type="helix" evidence="3">
    <location>
        <begin position="373"/>
        <end position="375"/>
    </location>
</feature>
<feature type="helix" evidence="3">
    <location>
        <begin position="384"/>
        <end position="390"/>
    </location>
</feature>
<feature type="helix" evidence="3">
    <location>
        <begin position="391"/>
        <end position="394"/>
    </location>
</feature>
<feature type="helix" evidence="3">
    <location>
        <begin position="395"/>
        <end position="404"/>
    </location>
</feature>
<feature type="helix" evidence="3">
    <location>
        <begin position="413"/>
        <end position="415"/>
    </location>
</feature>
<feature type="helix" evidence="3">
    <location>
        <begin position="425"/>
        <end position="432"/>
    </location>
</feature>
<feature type="helix" evidence="3">
    <location>
        <begin position="435"/>
        <end position="452"/>
    </location>
</feature>
<feature type="strand" evidence="3">
    <location>
        <begin position="459"/>
        <end position="462"/>
    </location>
</feature>
<feature type="turn" evidence="3">
    <location>
        <begin position="463"/>
        <end position="465"/>
    </location>
</feature>
<feature type="strand" evidence="3">
    <location>
        <begin position="466"/>
        <end position="472"/>
    </location>
</feature>
<feature type="helix" evidence="3">
    <location>
        <begin position="473"/>
        <end position="476"/>
    </location>
</feature>
<feature type="strand" evidence="3">
    <location>
        <begin position="490"/>
        <end position="495"/>
    </location>
</feature>
<feature type="helix" evidence="3">
    <location>
        <begin position="498"/>
        <end position="531"/>
    </location>
</feature>
<feature type="helix" evidence="3">
    <location>
        <begin position="533"/>
        <end position="559"/>
    </location>
</feature>
<feature type="strand" evidence="3">
    <location>
        <begin position="568"/>
        <end position="570"/>
    </location>
</feature>
<feature type="strand" evidence="3">
    <location>
        <begin position="572"/>
        <end position="577"/>
    </location>
</feature>
<feature type="helix" evidence="3">
    <location>
        <begin position="582"/>
        <end position="585"/>
    </location>
</feature>
<feature type="strand" evidence="3">
    <location>
        <begin position="586"/>
        <end position="588"/>
    </location>
</feature>
<feature type="strand" evidence="3">
    <location>
        <begin position="592"/>
        <end position="596"/>
    </location>
</feature>
<feature type="strand" evidence="3">
    <location>
        <begin position="602"/>
        <end position="606"/>
    </location>
</feature>
<feature type="strand" evidence="3">
    <location>
        <begin position="609"/>
        <end position="612"/>
    </location>
</feature>
<feature type="helix" evidence="3">
    <location>
        <begin position="613"/>
        <end position="627"/>
    </location>
</feature>
<feature type="turn" evidence="2">
    <location>
        <begin position="628"/>
        <end position="630"/>
    </location>
</feature>
<feature type="strand" evidence="3">
    <location>
        <begin position="633"/>
        <end position="640"/>
    </location>
</feature>
<feature type="strand" evidence="3">
    <location>
        <begin position="645"/>
        <end position="649"/>
    </location>
</feature>
<feature type="helix" evidence="3">
    <location>
        <begin position="664"/>
        <end position="673"/>
    </location>
</feature>
<feature type="turn" evidence="3">
    <location>
        <begin position="674"/>
        <end position="676"/>
    </location>
</feature>
<feature type="strand" evidence="3">
    <location>
        <begin position="682"/>
        <end position="687"/>
    </location>
</feature>
<feature type="helix" evidence="3">
    <location>
        <begin position="696"/>
        <end position="708"/>
    </location>
</feature>
<feature type="turn" evidence="3">
    <location>
        <begin position="709"/>
        <end position="712"/>
    </location>
</feature>
<feature type="strand" evidence="3">
    <location>
        <begin position="715"/>
        <end position="719"/>
    </location>
</feature>
<feature type="helix" evidence="3">
    <location>
        <begin position="723"/>
        <end position="726"/>
    </location>
</feature>
<feature type="turn" evidence="3">
    <location>
        <begin position="729"/>
        <end position="731"/>
    </location>
</feature>
<feature type="strand" evidence="3">
    <location>
        <begin position="733"/>
        <end position="740"/>
    </location>
</feature>
<feature type="strand" evidence="3">
    <location>
        <begin position="743"/>
        <end position="750"/>
    </location>
</feature>
<feature type="strand" evidence="3">
    <location>
        <begin position="755"/>
        <end position="758"/>
    </location>
</feature>
<feature type="helix" evidence="3">
    <location>
        <begin position="765"/>
        <end position="770"/>
    </location>
</feature>
<feature type="helix" evidence="3">
    <location>
        <begin position="776"/>
        <end position="779"/>
    </location>
</feature>